<evidence type="ECO:0000255" key="1">
    <source>
        <dbReference type="HAMAP-Rule" id="MF_00160"/>
    </source>
</evidence>
<organism>
    <name type="scientific">Pseudomonas entomophila (strain L48)</name>
    <dbReference type="NCBI Taxonomy" id="384676"/>
    <lineage>
        <taxon>Bacteria</taxon>
        <taxon>Pseudomonadati</taxon>
        <taxon>Pseudomonadota</taxon>
        <taxon>Gammaproteobacteria</taxon>
        <taxon>Pseudomonadales</taxon>
        <taxon>Pseudomonadaceae</taxon>
        <taxon>Pseudomonas</taxon>
    </lineage>
</organism>
<comment type="function">
    <text evidence="1">Catalyzes the reversible conversion of 3-phosphohydroxypyruvate to phosphoserine and of 3-hydroxy-2-oxo-4-phosphonooxybutanoate to phosphohydroxythreonine.</text>
</comment>
<comment type="catalytic activity">
    <reaction evidence="1">
        <text>O-phospho-L-serine + 2-oxoglutarate = 3-phosphooxypyruvate + L-glutamate</text>
        <dbReference type="Rhea" id="RHEA:14329"/>
        <dbReference type="ChEBI" id="CHEBI:16810"/>
        <dbReference type="ChEBI" id="CHEBI:18110"/>
        <dbReference type="ChEBI" id="CHEBI:29985"/>
        <dbReference type="ChEBI" id="CHEBI:57524"/>
        <dbReference type="EC" id="2.6.1.52"/>
    </reaction>
</comment>
<comment type="catalytic activity">
    <reaction evidence="1">
        <text>4-(phosphooxy)-L-threonine + 2-oxoglutarate = (R)-3-hydroxy-2-oxo-4-phosphooxybutanoate + L-glutamate</text>
        <dbReference type="Rhea" id="RHEA:16573"/>
        <dbReference type="ChEBI" id="CHEBI:16810"/>
        <dbReference type="ChEBI" id="CHEBI:29985"/>
        <dbReference type="ChEBI" id="CHEBI:58452"/>
        <dbReference type="ChEBI" id="CHEBI:58538"/>
        <dbReference type="EC" id="2.6.1.52"/>
    </reaction>
</comment>
<comment type="cofactor">
    <cofactor evidence="1">
        <name>pyridoxal 5'-phosphate</name>
        <dbReference type="ChEBI" id="CHEBI:597326"/>
    </cofactor>
    <text evidence="1">Binds 1 pyridoxal phosphate per subunit.</text>
</comment>
<comment type="pathway">
    <text evidence="1">Amino-acid biosynthesis; L-serine biosynthesis; L-serine from 3-phospho-D-glycerate: step 2/3.</text>
</comment>
<comment type="pathway">
    <text evidence="1">Cofactor biosynthesis; pyridoxine 5'-phosphate biosynthesis; pyridoxine 5'-phosphate from D-erythrose 4-phosphate: step 3/5.</text>
</comment>
<comment type="subunit">
    <text evidence="1">Homodimer.</text>
</comment>
<comment type="subcellular location">
    <subcellularLocation>
        <location evidence="1">Cytoplasm</location>
    </subcellularLocation>
</comment>
<comment type="similarity">
    <text evidence="1">Belongs to the class-V pyridoxal-phosphate-dependent aminotransferase family. SerC subfamily.</text>
</comment>
<keyword id="KW-0028">Amino-acid biosynthesis</keyword>
<keyword id="KW-0032">Aminotransferase</keyword>
<keyword id="KW-0963">Cytoplasm</keyword>
<keyword id="KW-0663">Pyridoxal phosphate</keyword>
<keyword id="KW-0664">Pyridoxine biosynthesis</keyword>
<keyword id="KW-0718">Serine biosynthesis</keyword>
<keyword id="KW-0808">Transferase</keyword>
<feature type="chain" id="PRO_1000123473" description="Phosphoserine aminotransferase">
    <location>
        <begin position="1"/>
        <end position="361"/>
    </location>
</feature>
<feature type="binding site" evidence="1">
    <location>
        <position position="43"/>
    </location>
    <ligand>
        <name>L-glutamate</name>
        <dbReference type="ChEBI" id="CHEBI:29985"/>
    </ligand>
</feature>
<feature type="binding site" evidence="1">
    <location>
        <begin position="77"/>
        <end position="78"/>
    </location>
    <ligand>
        <name>pyridoxal 5'-phosphate</name>
        <dbReference type="ChEBI" id="CHEBI:597326"/>
    </ligand>
</feature>
<feature type="binding site" evidence="1">
    <location>
        <position position="103"/>
    </location>
    <ligand>
        <name>pyridoxal 5'-phosphate</name>
        <dbReference type="ChEBI" id="CHEBI:597326"/>
    </ligand>
</feature>
<feature type="binding site" evidence="1">
    <location>
        <position position="153"/>
    </location>
    <ligand>
        <name>pyridoxal 5'-phosphate</name>
        <dbReference type="ChEBI" id="CHEBI:597326"/>
    </ligand>
</feature>
<feature type="binding site" evidence="1">
    <location>
        <position position="173"/>
    </location>
    <ligand>
        <name>pyridoxal 5'-phosphate</name>
        <dbReference type="ChEBI" id="CHEBI:597326"/>
    </ligand>
</feature>
<feature type="binding site" evidence="1">
    <location>
        <position position="196"/>
    </location>
    <ligand>
        <name>pyridoxal 5'-phosphate</name>
        <dbReference type="ChEBI" id="CHEBI:597326"/>
    </ligand>
</feature>
<feature type="binding site" evidence="1">
    <location>
        <begin position="238"/>
        <end position="239"/>
    </location>
    <ligand>
        <name>pyridoxal 5'-phosphate</name>
        <dbReference type="ChEBI" id="CHEBI:597326"/>
    </ligand>
</feature>
<feature type="modified residue" description="N6-(pyridoxal phosphate)lysine" evidence="1">
    <location>
        <position position="197"/>
    </location>
</feature>
<gene>
    <name evidence="1" type="primary">serC</name>
    <name type="ordered locus">PSEEN1488</name>
</gene>
<sequence length="361" mass="39831">MSKRAFNFCAGPAALPDAVLQRAQAEMLDWRGKGLSVMEMSHRSDDYVAIAEKAEQDLRDLLSVPSNYKVLFLQGGASQQFAEIPLNLLPENGVADYVETGIWSKKAIEEARRFGSVNVAASAKAYDYLAIPGQNEWKLSKNAAYLHYASNETIGGLQFDWVPEAGDVPLVVDMSSDILSRPIDVSQYGLIYAGAQKNIGPSGLVVVIVREDLLGRARSSCPTMLDYKVSADNGSMYNTPATYSWYLSGLVFEWLKEQGGVEAMEQRNRAKKDRLYGFIDSSEFYTNPISHNARSWMNVPFRLADERLDKAFLAGADARGLLNLKGHRSVGGMRASIYNALGLEAVEALVGYMAEFEKEHA</sequence>
<dbReference type="EC" id="2.6.1.52" evidence="1"/>
<dbReference type="EMBL" id="CT573326">
    <property type="protein sequence ID" value="CAK14357.1"/>
    <property type="molecule type" value="Genomic_DNA"/>
</dbReference>
<dbReference type="RefSeq" id="WP_011532772.1">
    <property type="nucleotide sequence ID" value="NC_008027.1"/>
</dbReference>
<dbReference type="SMR" id="Q1IDA2"/>
<dbReference type="STRING" id="384676.PSEEN1488"/>
<dbReference type="GeneID" id="32804740"/>
<dbReference type="KEGG" id="pen:PSEEN1488"/>
<dbReference type="eggNOG" id="COG1932">
    <property type="taxonomic scope" value="Bacteria"/>
</dbReference>
<dbReference type="HOGENOM" id="CLU_034866_0_2_6"/>
<dbReference type="OrthoDB" id="9809412at2"/>
<dbReference type="UniPathway" id="UPA00135">
    <property type="reaction ID" value="UER00197"/>
</dbReference>
<dbReference type="UniPathway" id="UPA00244">
    <property type="reaction ID" value="UER00311"/>
</dbReference>
<dbReference type="Proteomes" id="UP000000658">
    <property type="component" value="Chromosome"/>
</dbReference>
<dbReference type="GO" id="GO:0005737">
    <property type="term" value="C:cytoplasm"/>
    <property type="evidence" value="ECO:0007669"/>
    <property type="project" value="UniProtKB-SubCell"/>
</dbReference>
<dbReference type="GO" id="GO:0004648">
    <property type="term" value="F:O-phospho-L-serine:2-oxoglutarate aminotransferase activity"/>
    <property type="evidence" value="ECO:0007669"/>
    <property type="project" value="UniProtKB-UniRule"/>
</dbReference>
<dbReference type="GO" id="GO:0030170">
    <property type="term" value="F:pyridoxal phosphate binding"/>
    <property type="evidence" value="ECO:0007669"/>
    <property type="project" value="UniProtKB-UniRule"/>
</dbReference>
<dbReference type="GO" id="GO:0006564">
    <property type="term" value="P:L-serine biosynthetic process"/>
    <property type="evidence" value="ECO:0007669"/>
    <property type="project" value="UniProtKB-UniRule"/>
</dbReference>
<dbReference type="GO" id="GO:0008615">
    <property type="term" value="P:pyridoxine biosynthetic process"/>
    <property type="evidence" value="ECO:0007669"/>
    <property type="project" value="UniProtKB-UniRule"/>
</dbReference>
<dbReference type="CDD" id="cd00611">
    <property type="entry name" value="PSAT_like"/>
    <property type="match status" value="1"/>
</dbReference>
<dbReference type="FunFam" id="3.40.640.10:FF:000010">
    <property type="entry name" value="Phosphoserine aminotransferase"/>
    <property type="match status" value="1"/>
</dbReference>
<dbReference type="FunFam" id="3.90.1150.10:FF:000006">
    <property type="entry name" value="Phosphoserine aminotransferase"/>
    <property type="match status" value="1"/>
</dbReference>
<dbReference type="Gene3D" id="3.90.1150.10">
    <property type="entry name" value="Aspartate Aminotransferase, domain 1"/>
    <property type="match status" value="1"/>
</dbReference>
<dbReference type="Gene3D" id="3.40.640.10">
    <property type="entry name" value="Type I PLP-dependent aspartate aminotransferase-like (Major domain)"/>
    <property type="match status" value="1"/>
</dbReference>
<dbReference type="HAMAP" id="MF_00160">
    <property type="entry name" value="SerC_aminotrans_5"/>
    <property type="match status" value="1"/>
</dbReference>
<dbReference type="InterPro" id="IPR000192">
    <property type="entry name" value="Aminotrans_V_dom"/>
</dbReference>
<dbReference type="InterPro" id="IPR022278">
    <property type="entry name" value="Pser_aminoTfrase"/>
</dbReference>
<dbReference type="InterPro" id="IPR015424">
    <property type="entry name" value="PyrdxlP-dep_Trfase"/>
</dbReference>
<dbReference type="InterPro" id="IPR015421">
    <property type="entry name" value="PyrdxlP-dep_Trfase_major"/>
</dbReference>
<dbReference type="InterPro" id="IPR015422">
    <property type="entry name" value="PyrdxlP-dep_Trfase_small"/>
</dbReference>
<dbReference type="NCBIfam" id="NF003764">
    <property type="entry name" value="PRK05355.1"/>
    <property type="match status" value="1"/>
</dbReference>
<dbReference type="NCBIfam" id="TIGR01364">
    <property type="entry name" value="serC_1"/>
    <property type="match status" value="1"/>
</dbReference>
<dbReference type="PANTHER" id="PTHR43247">
    <property type="entry name" value="PHOSPHOSERINE AMINOTRANSFERASE"/>
    <property type="match status" value="1"/>
</dbReference>
<dbReference type="PANTHER" id="PTHR43247:SF1">
    <property type="entry name" value="PHOSPHOSERINE AMINOTRANSFERASE"/>
    <property type="match status" value="1"/>
</dbReference>
<dbReference type="Pfam" id="PF00266">
    <property type="entry name" value="Aminotran_5"/>
    <property type="match status" value="1"/>
</dbReference>
<dbReference type="PIRSF" id="PIRSF000525">
    <property type="entry name" value="SerC"/>
    <property type="match status" value="1"/>
</dbReference>
<dbReference type="SUPFAM" id="SSF53383">
    <property type="entry name" value="PLP-dependent transferases"/>
    <property type="match status" value="1"/>
</dbReference>
<proteinExistence type="inferred from homology"/>
<reference key="1">
    <citation type="journal article" date="2006" name="Nat. Biotechnol.">
        <title>Complete genome sequence of the entomopathogenic and metabolically versatile soil bacterium Pseudomonas entomophila.</title>
        <authorList>
            <person name="Vodovar N."/>
            <person name="Vallenet D."/>
            <person name="Cruveiller S."/>
            <person name="Rouy Z."/>
            <person name="Barbe V."/>
            <person name="Acosta C."/>
            <person name="Cattolico L."/>
            <person name="Jubin C."/>
            <person name="Lajus A."/>
            <person name="Segurens B."/>
            <person name="Vacherie B."/>
            <person name="Wincker P."/>
            <person name="Weissenbach J."/>
            <person name="Lemaitre B."/>
            <person name="Medigue C."/>
            <person name="Boccard F."/>
        </authorList>
    </citation>
    <scope>NUCLEOTIDE SEQUENCE [LARGE SCALE GENOMIC DNA]</scope>
    <source>
        <strain>L48</strain>
    </source>
</reference>
<name>SERC_PSEE4</name>
<protein>
    <recommendedName>
        <fullName evidence="1">Phosphoserine aminotransferase</fullName>
        <ecNumber evidence="1">2.6.1.52</ecNumber>
    </recommendedName>
    <alternativeName>
        <fullName evidence="1">Phosphohydroxythreonine aminotransferase</fullName>
        <shortName evidence="1">PSAT</shortName>
    </alternativeName>
</protein>
<accession>Q1IDA2</accession>